<reference key="1">
    <citation type="journal article" date="2005" name="Proc. Natl. Acad. Sci. U.S.A.">
        <title>The complete genome sequence of Mycobacterium avium subspecies paratuberculosis.</title>
        <authorList>
            <person name="Li L."/>
            <person name="Bannantine J.P."/>
            <person name="Zhang Q."/>
            <person name="Amonsin A."/>
            <person name="May B.J."/>
            <person name="Alt D."/>
            <person name="Banerji N."/>
            <person name="Kanjilal S."/>
            <person name="Kapur V."/>
        </authorList>
    </citation>
    <scope>NUCLEOTIDE SEQUENCE [LARGE SCALE GENOMIC DNA]</scope>
    <source>
        <strain>ATCC BAA-968 / K-10</strain>
    </source>
</reference>
<organism>
    <name type="scientific">Mycolicibacterium paratuberculosis (strain ATCC BAA-968 / K-10)</name>
    <name type="common">Mycobacterium paratuberculosis</name>
    <dbReference type="NCBI Taxonomy" id="262316"/>
    <lineage>
        <taxon>Bacteria</taxon>
        <taxon>Bacillati</taxon>
        <taxon>Actinomycetota</taxon>
        <taxon>Actinomycetes</taxon>
        <taxon>Mycobacteriales</taxon>
        <taxon>Mycobacteriaceae</taxon>
        <taxon>Mycobacterium</taxon>
        <taxon>Mycobacterium avium complex (MAC)</taxon>
    </lineage>
</organism>
<accession>Q73SA7</accession>
<name>RL16_MYCPA</name>
<feature type="chain" id="PRO_0000062137" description="Large ribosomal subunit protein uL16">
    <location>
        <begin position="1"/>
        <end position="138"/>
    </location>
</feature>
<feature type="region of interest" description="Disordered" evidence="2">
    <location>
        <begin position="1"/>
        <end position="22"/>
    </location>
</feature>
<feature type="compositionally biased region" description="Basic residues" evidence="2">
    <location>
        <begin position="1"/>
        <end position="17"/>
    </location>
</feature>
<evidence type="ECO:0000255" key="1">
    <source>
        <dbReference type="HAMAP-Rule" id="MF_01342"/>
    </source>
</evidence>
<evidence type="ECO:0000256" key="2">
    <source>
        <dbReference type="SAM" id="MobiDB-lite"/>
    </source>
</evidence>
<evidence type="ECO:0000305" key="3"/>
<sequence length="138" mass="15721">MLIPRKVKHRKQHHPRQRGIASGGTAVNFGDYGIQALEHAYVTNRQIESARIAINRHIKRGGKVWINVFPDRPLTKKPAETRMGSGKGSPEWWVVNVKPGRVLFELSYPNEQTARAALTRAIHKLPIKARIVTREDQF</sequence>
<proteinExistence type="inferred from homology"/>
<protein>
    <recommendedName>
        <fullName evidence="1">Large ribosomal subunit protein uL16</fullName>
    </recommendedName>
    <alternativeName>
        <fullName evidence="3">50S ribosomal protein L16</fullName>
    </alternativeName>
</protein>
<dbReference type="EMBL" id="AE016958">
    <property type="protein sequence ID" value="AAS06718.1"/>
    <property type="molecule type" value="Genomic_DNA"/>
</dbReference>
<dbReference type="RefSeq" id="WP_003873511.1">
    <property type="nucleotide sequence ID" value="NZ_CP106873.1"/>
</dbReference>
<dbReference type="SMR" id="Q73SA7"/>
<dbReference type="STRING" id="262316.MAP_4168"/>
<dbReference type="GeneID" id="75271978"/>
<dbReference type="KEGG" id="mpa:MAP_4168"/>
<dbReference type="eggNOG" id="COG0197">
    <property type="taxonomic scope" value="Bacteria"/>
</dbReference>
<dbReference type="HOGENOM" id="CLU_078858_2_1_11"/>
<dbReference type="Proteomes" id="UP000000580">
    <property type="component" value="Chromosome"/>
</dbReference>
<dbReference type="GO" id="GO:0022625">
    <property type="term" value="C:cytosolic large ribosomal subunit"/>
    <property type="evidence" value="ECO:0007669"/>
    <property type="project" value="TreeGrafter"/>
</dbReference>
<dbReference type="GO" id="GO:0019843">
    <property type="term" value="F:rRNA binding"/>
    <property type="evidence" value="ECO:0007669"/>
    <property type="project" value="UniProtKB-UniRule"/>
</dbReference>
<dbReference type="GO" id="GO:0003735">
    <property type="term" value="F:structural constituent of ribosome"/>
    <property type="evidence" value="ECO:0007669"/>
    <property type="project" value="InterPro"/>
</dbReference>
<dbReference type="GO" id="GO:0000049">
    <property type="term" value="F:tRNA binding"/>
    <property type="evidence" value="ECO:0007669"/>
    <property type="project" value="UniProtKB-KW"/>
</dbReference>
<dbReference type="GO" id="GO:0006412">
    <property type="term" value="P:translation"/>
    <property type="evidence" value="ECO:0007669"/>
    <property type="project" value="UniProtKB-UniRule"/>
</dbReference>
<dbReference type="CDD" id="cd01433">
    <property type="entry name" value="Ribosomal_L16_L10e"/>
    <property type="match status" value="1"/>
</dbReference>
<dbReference type="FunFam" id="3.90.1170.10:FF:000001">
    <property type="entry name" value="50S ribosomal protein L16"/>
    <property type="match status" value="1"/>
</dbReference>
<dbReference type="Gene3D" id="3.90.1170.10">
    <property type="entry name" value="Ribosomal protein L10e/L16"/>
    <property type="match status" value="1"/>
</dbReference>
<dbReference type="HAMAP" id="MF_01342">
    <property type="entry name" value="Ribosomal_uL16"/>
    <property type="match status" value="1"/>
</dbReference>
<dbReference type="InterPro" id="IPR047873">
    <property type="entry name" value="Ribosomal_uL16"/>
</dbReference>
<dbReference type="InterPro" id="IPR000114">
    <property type="entry name" value="Ribosomal_uL16_bact-type"/>
</dbReference>
<dbReference type="InterPro" id="IPR020798">
    <property type="entry name" value="Ribosomal_uL16_CS"/>
</dbReference>
<dbReference type="InterPro" id="IPR016180">
    <property type="entry name" value="Ribosomal_uL16_dom"/>
</dbReference>
<dbReference type="InterPro" id="IPR036920">
    <property type="entry name" value="Ribosomal_uL16_sf"/>
</dbReference>
<dbReference type="NCBIfam" id="TIGR01164">
    <property type="entry name" value="rplP_bact"/>
    <property type="match status" value="1"/>
</dbReference>
<dbReference type="PANTHER" id="PTHR12220">
    <property type="entry name" value="50S/60S RIBOSOMAL PROTEIN L16"/>
    <property type="match status" value="1"/>
</dbReference>
<dbReference type="PANTHER" id="PTHR12220:SF13">
    <property type="entry name" value="LARGE RIBOSOMAL SUBUNIT PROTEIN UL16M"/>
    <property type="match status" value="1"/>
</dbReference>
<dbReference type="Pfam" id="PF00252">
    <property type="entry name" value="Ribosomal_L16"/>
    <property type="match status" value="1"/>
</dbReference>
<dbReference type="PRINTS" id="PR00060">
    <property type="entry name" value="RIBOSOMALL16"/>
</dbReference>
<dbReference type="SUPFAM" id="SSF54686">
    <property type="entry name" value="Ribosomal protein L16p/L10e"/>
    <property type="match status" value="1"/>
</dbReference>
<dbReference type="PROSITE" id="PS00586">
    <property type="entry name" value="RIBOSOMAL_L16_1"/>
    <property type="match status" value="1"/>
</dbReference>
<dbReference type="PROSITE" id="PS00701">
    <property type="entry name" value="RIBOSOMAL_L16_2"/>
    <property type="match status" value="1"/>
</dbReference>
<gene>
    <name evidence="1" type="primary">rplP</name>
    <name type="ordered locus">MAP_4168</name>
</gene>
<comment type="function">
    <text evidence="1">Binds 23S rRNA and is also seen to make contacts with the A and possibly P site tRNAs.</text>
</comment>
<comment type="subunit">
    <text evidence="1">Part of the 50S ribosomal subunit.</text>
</comment>
<comment type="similarity">
    <text evidence="1">Belongs to the universal ribosomal protein uL16 family.</text>
</comment>
<keyword id="KW-1185">Reference proteome</keyword>
<keyword id="KW-0687">Ribonucleoprotein</keyword>
<keyword id="KW-0689">Ribosomal protein</keyword>
<keyword id="KW-0694">RNA-binding</keyword>
<keyword id="KW-0699">rRNA-binding</keyword>
<keyword id="KW-0820">tRNA-binding</keyword>